<evidence type="ECO:0000250" key="1">
    <source>
        <dbReference type="UniProtKB" id="A0AEI6"/>
    </source>
</evidence>
<evidence type="ECO:0000250" key="2">
    <source>
        <dbReference type="UniProtKB" id="E7EKE0"/>
    </source>
</evidence>
<evidence type="ECO:0000255" key="3"/>
<evidence type="ECO:0000269" key="4">
    <source>
    </source>
</evidence>
<evidence type="ECO:0000303" key="5">
    <source>
    </source>
</evidence>
<evidence type="ECO:0000305" key="6">
    <source>
    </source>
</evidence>
<evidence type="ECO:0000312" key="7">
    <source>
        <dbReference type="EMBL" id="CAI99627.1"/>
    </source>
</evidence>
<feature type="signal peptide" evidence="3">
    <location>
        <begin position="1"/>
        <end position="22"/>
    </location>
</feature>
<feature type="propeptide" id="PRO_0000439449" evidence="6">
    <location>
        <begin position="23"/>
        <end position="39"/>
    </location>
</feature>
<feature type="peptide" id="PRO_0000439450" description="Pelophylaxin-3" evidence="4">
    <location>
        <begin position="42"/>
        <end position="74"/>
    </location>
</feature>
<feature type="disulfide bond" evidence="1">
    <location>
        <begin position="68"/>
        <end position="74"/>
    </location>
</feature>
<name>PELO3_PELFU</name>
<keyword id="KW-0878">Amphibian defense peptide</keyword>
<keyword id="KW-0929">Antimicrobial</keyword>
<keyword id="KW-0165">Cleavage on pair of basic residues</keyword>
<keyword id="KW-0903">Direct protein sequencing</keyword>
<keyword id="KW-1015">Disulfide bond</keyword>
<keyword id="KW-0964">Secreted</keyword>
<keyword id="KW-0732">Signal</keyword>
<protein>
    <recommendedName>
        <fullName evidence="5">Pelophylaxin-3</fullName>
    </recommendedName>
</protein>
<accession>Q2WCN6</accession>
<proteinExistence type="evidence at protein level"/>
<reference evidence="7" key="1">
    <citation type="journal article" date="2006" name="Peptides">
        <title>Pelophylaxins: novel antimicrobial peptide homologs from the skin secretion of the Fukien gold-striped pond frog, Pelophylax plancyi fukienensis: identification by 'shotgun' cDNA cloning and sequence analysis.</title>
        <authorList>
            <person name="Zhou M."/>
            <person name="Chen T."/>
            <person name="Walker B."/>
            <person name="Shaw C."/>
        </authorList>
    </citation>
    <scope>NUCLEOTIDE SEQUENCE [MRNA]</scope>
    <scope>PROTEIN SEQUENCE OF 42-74</scope>
    <scope>SUBCELLULAR LOCATION</scope>
    <scope>MASS SPECTROMETRY</scope>
    <scope>IDENTIFICATION BY MASS SPECTROMETRY</scope>
    <source>
        <tissue evidence="5">Skin secretion</tissue>
    </source>
</reference>
<dbReference type="EMBL" id="AJ972869">
    <property type="protein sequence ID" value="CAI99627.1"/>
    <property type="molecule type" value="mRNA"/>
</dbReference>
<dbReference type="SMR" id="Q2WCN6"/>
<dbReference type="GO" id="GO:0005576">
    <property type="term" value="C:extracellular region"/>
    <property type="evidence" value="ECO:0007669"/>
    <property type="project" value="UniProtKB-SubCell"/>
</dbReference>
<dbReference type="GO" id="GO:0006952">
    <property type="term" value="P:defense response"/>
    <property type="evidence" value="ECO:0007669"/>
    <property type="project" value="UniProtKB-KW"/>
</dbReference>
<dbReference type="InterPro" id="IPR012521">
    <property type="entry name" value="Antimicrobial_frog_2"/>
</dbReference>
<dbReference type="InterPro" id="IPR004275">
    <property type="entry name" value="Frog_antimicrobial_propeptide"/>
</dbReference>
<dbReference type="Pfam" id="PF08023">
    <property type="entry name" value="Antimicrobial_2"/>
    <property type="match status" value="1"/>
</dbReference>
<dbReference type="Pfam" id="PF03032">
    <property type="entry name" value="FSAP_sig_propep"/>
    <property type="match status" value="1"/>
</dbReference>
<sequence>MFTLKKSLLLVFFLGTISLSLCEDERNADEDDGEMTEEVRRGLMDSLKGLAATAGKTVLQGLLKTASCKLEKTC</sequence>
<organism evidence="7">
    <name type="scientific">Pelophylax fukienensis</name>
    <name type="common">Fukien gold-striped pond frog</name>
    <name type="synonym">Rana fukienensis</name>
    <dbReference type="NCBI Taxonomy" id="88448"/>
    <lineage>
        <taxon>Eukaryota</taxon>
        <taxon>Metazoa</taxon>
        <taxon>Chordata</taxon>
        <taxon>Craniata</taxon>
        <taxon>Vertebrata</taxon>
        <taxon>Euteleostomi</taxon>
        <taxon>Amphibia</taxon>
        <taxon>Batrachia</taxon>
        <taxon>Anura</taxon>
        <taxon>Neobatrachia</taxon>
        <taxon>Ranoidea</taxon>
        <taxon>Ranidae</taxon>
        <taxon>Pelophylax</taxon>
    </lineage>
</organism>
<comment type="function">
    <text evidence="2">Antimicrobial peptide.</text>
</comment>
<comment type="subcellular location">
    <subcellularLocation>
        <location evidence="3 4">Secreted</location>
    </subcellularLocation>
</comment>
<comment type="tissue specificity">
    <text evidence="6">Expressed by the skin glands.</text>
</comment>
<comment type="mass spectrometry"/>
<comment type="similarity">
    <text evidence="3">Belongs to the frog skin active peptide (FSAP) family. Brevinin subfamily.</text>
</comment>